<keyword id="KW-0131">Cell cycle</keyword>
<keyword id="KW-0132">Cell division</keyword>
<keyword id="KW-0256">Endoplasmic reticulum</keyword>
<keyword id="KW-0472">Membrane</keyword>
<keyword id="KW-0493">Microtubule</keyword>
<keyword id="KW-0498">Mitosis</keyword>
<keyword id="KW-0597">Phosphoprotein</keyword>
<keyword id="KW-1185">Reference proteome</keyword>
<keyword id="KW-0812">Transmembrane</keyword>
<keyword id="KW-1133">Transmembrane helix</keyword>
<dbReference type="EMBL" id="CR860966">
    <property type="protein sequence ID" value="CAH93068.1"/>
    <property type="molecule type" value="mRNA"/>
</dbReference>
<dbReference type="RefSeq" id="NP_001129004.1">
    <property type="nucleotide sequence ID" value="NM_001135532.1"/>
</dbReference>
<dbReference type="FunCoup" id="Q5R598">
    <property type="interactions" value="596"/>
</dbReference>
<dbReference type="STRING" id="9601.ENSPPYP00000020635"/>
<dbReference type="Ensembl" id="ENSPPYT00000021464.3">
    <property type="protein sequence ID" value="ENSPPYP00000020635.2"/>
    <property type="gene ID" value="ENSPPYG00000018414.3"/>
</dbReference>
<dbReference type="GeneID" id="100190844"/>
<dbReference type="KEGG" id="pon:100190844"/>
<dbReference type="CTD" id="80346"/>
<dbReference type="eggNOG" id="KOG1726">
    <property type="taxonomic scope" value="Eukaryota"/>
</dbReference>
<dbReference type="GeneTree" id="ENSGT00940000161674"/>
<dbReference type="HOGENOM" id="CLU_028431_0_1_1"/>
<dbReference type="InParanoid" id="Q5R598"/>
<dbReference type="OrthoDB" id="434647at2759"/>
<dbReference type="TreeFam" id="TF314177"/>
<dbReference type="Proteomes" id="UP000001595">
    <property type="component" value="Chromosome 8"/>
</dbReference>
<dbReference type="GO" id="GO:0005881">
    <property type="term" value="C:cytoplasmic microtubule"/>
    <property type="evidence" value="ECO:0007669"/>
    <property type="project" value="TreeGrafter"/>
</dbReference>
<dbReference type="GO" id="GO:0005783">
    <property type="term" value="C:endoplasmic reticulum"/>
    <property type="evidence" value="ECO:0000250"/>
    <property type="project" value="UniProtKB"/>
</dbReference>
<dbReference type="GO" id="GO:0005789">
    <property type="term" value="C:endoplasmic reticulum membrane"/>
    <property type="evidence" value="ECO:0007669"/>
    <property type="project" value="UniProtKB-SubCell"/>
</dbReference>
<dbReference type="GO" id="GO:0071782">
    <property type="term" value="C:endoplasmic reticulum tubular network"/>
    <property type="evidence" value="ECO:0007669"/>
    <property type="project" value="TreeGrafter"/>
</dbReference>
<dbReference type="GO" id="GO:0008017">
    <property type="term" value="F:microtubule binding"/>
    <property type="evidence" value="ECO:0000250"/>
    <property type="project" value="UniProtKB"/>
</dbReference>
<dbReference type="GO" id="GO:0051301">
    <property type="term" value="P:cell division"/>
    <property type="evidence" value="ECO:0007669"/>
    <property type="project" value="UniProtKB-KW"/>
</dbReference>
<dbReference type="GO" id="GO:0071786">
    <property type="term" value="P:endoplasmic reticulum tubular network organization"/>
    <property type="evidence" value="ECO:0007669"/>
    <property type="project" value="TreeGrafter"/>
</dbReference>
<dbReference type="GO" id="GO:0007084">
    <property type="term" value="P:mitotic nuclear membrane reassembly"/>
    <property type="evidence" value="ECO:0000250"/>
    <property type="project" value="UniProtKB"/>
</dbReference>
<dbReference type="GO" id="GO:0006998">
    <property type="term" value="P:nuclear envelope organization"/>
    <property type="evidence" value="ECO:0000250"/>
    <property type="project" value="UniProtKB"/>
</dbReference>
<dbReference type="InterPro" id="IPR004345">
    <property type="entry name" value="TB2_DP1_HVA22"/>
</dbReference>
<dbReference type="PANTHER" id="PTHR12300">
    <property type="entry name" value="HVA22-LIKE PROTEINS"/>
    <property type="match status" value="1"/>
</dbReference>
<dbReference type="PANTHER" id="PTHR12300:SF36">
    <property type="entry name" value="RECEPTOR EXPRESSION-ENHANCING PROTEIN 4"/>
    <property type="match status" value="1"/>
</dbReference>
<dbReference type="Pfam" id="PF03134">
    <property type="entry name" value="TB2_DP1_HVA22"/>
    <property type="match status" value="1"/>
</dbReference>
<comment type="function">
    <text evidence="1">Microtubule-binding protein required to ensure proper cell division and nuclear envelope reassembly by sequestering the endoplasmic reticulum away from chromosomes during mitosis. Probably acts by clearing the endoplasmic reticulum membrane from metaphase chromosomes (By similarity).</text>
</comment>
<comment type="subcellular location">
    <subcellularLocation>
        <location evidence="1">Endoplasmic reticulum membrane</location>
        <topology evidence="1">Multi-pass membrane protein</topology>
    </subcellularLocation>
</comment>
<comment type="similarity">
    <text evidence="5">Belongs to the DP1 family.</text>
</comment>
<gene>
    <name type="primary">REEP4</name>
</gene>
<reference key="1">
    <citation type="submission" date="2004-11" db="EMBL/GenBank/DDBJ databases">
        <authorList>
            <consortium name="The German cDNA consortium"/>
        </authorList>
    </citation>
    <scope>NUCLEOTIDE SEQUENCE [LARGE SCALE MRNA]</scope>
    <source>
        <tissue>Kidney</tissue>
    </source>
</reference>
<organism>
    <name type="scientific">Pongo abelii</name>
    <name type="common">Sumatran orangutan</name>
    <name type="synonym">Pongo pygmaeus abelii</name>
    <dbReference type="NCBI Taxonomy" id="9601"/>
    <lineage>
        <taxon>Eukaryota</taxon>
        <taxon>Metazoa</taxon>
        <taxon>Chordata</taxon>
        <taxon>Craniata</taxon>
        <taxon>Vertebrata</taxon>
        <taxon>Euteleostomi</taxon>
        <taxon>Mammalia</taxon>
        <taxon>Eutheria</taxon>
        <taxon>Euarchontoglires</taxon>
        <taxon>Primates</taxon>
        <taxon>Haplorrhini</taxon>
        <taxon>Catarrhini</taxon>
        <taxon>Hominidae</taxon>
        <taxon>Pongo</taxon>
    </lineage>
</organism>
<evidence type="ECO:0000250" key="1"/>
<evidence type="ECO:0000250" key="2">
    <source>
        <dbReference type="UniProtKB" id="Q9H6H4"/>
    </source>
</evidence>
<evidence type="ECO:0000255" key="3"/>
<evidence type="ECO:0000256" key="4">
    <source>
        <dbReference type="SAM" id="MobiDB-lite"/>
    </source>
</evidence>
<evidence type="ECO:0000305" key="5"/>
<sequence>MVSWMICRLVVLVFGMLCPAYASYKAVKTKNIREYVRWMMYWIVFALFMAAEIITDIFISWFPFYYEIKMAFVLWLLSPYTKGASLLYRKFVHPSLSRHEKEIDAYIVQAKERSYETVLSFGKRGLNIAASAAVQAATKSQGALAGRLRSFSMQDLRAIPDAPAPAYHDPLYLEDQVPHQRPPIGYRAGGLQDSDTEDECWSDTEAVPRAPARPREKPLIRSQSLRVVKRKPPVREGTSRSLKVRTRKKTVPSDMDS</sequence>
<accession>Q5R598</accession>
<name>REEP4_PONAB</name>
<feature type="chain" id="PRO_0000101832" description="Receptor expression-enhancing protein 4">
    <location>
        <begin position="1"/>
        <end position="257"/>
    </location>
</feature>
<feature type="transmembrane region" description="Helical" evidence="3">
    <location>
        <begin position="1"/>
        <end position="21"/>
    </location>
</feature>
<feature type="transmembrane region" description="Helical" evidence="3">
    <location>
        <begin position="42"/>
        <end position="62"/>
    </location>
</feature>
<feature type="region of interest" description="Disordered" evidence="4">
    <location>
        <begin position="178"/>
        <end position="257"/>
    </location>
</feature>
<feature type="modified residue" description="Phosphoserine" evidence="2">
    <location>
        <position position="152"/>
    </location>
</feature>
<feature type="modified residue" description="Phosphoserine" evidence="2">
    <location>
        <position position="194"/>
    </location>
</feature>
<feature type="modified residue" description="Phosphothreonine" evidence="2">
    <location>
        <position position="196"/>
    </location>
</feature>
<feature type="modified residue" description="Phosphoserine" evidence="2">
    <location>
        <position position="202"/>
    </location>
</feature>
<feature type="modified residue" description="Phosphothreonine" evidence="2">
    <location>
        <position position="250"/>
    </location>
</feature>
<feature type="modified residue" description="Phosphoserine" evidence="2">
    <location>
        <position position="253"/>
    </location>
</feature>
<protein>
    <recommendedName>
        <fullName>Receptor expression-enhancing protein 4</fullName>
    </recommendedName>
</protein>
<proteinExistence type="evidence at transcript level"/>